<protein>
    <recommendedName>
        <fullName>Superoxide dismutase [Mn]</fullName>
        <ecNumber>1.15.1.1</ecNumber>
    </recommendedName>
</protein>
<sequence>MAIILPELPYAYDALEPQFDAETMTLHHDKHHATYVANTNAALEKHPEIGENLEELLADVTKIPEDIRQTLINNGGGHLNHALFWELLSPEKQDVTPDVAQAIDDAFGSFDAFKEQFTAAATGRFGSGWAWLVVNKEGQLEITSTANQDTPISEGKKPILALDVWEHAYYLNYRNVRPNYIKAFFEIVNWKKVSELYQAAK</sequence>
<gene>
    <name type="primary">sodA</name>
    <name type="synonym">sod</name>
    <name type="ordered locus">SPy_1406</name>
    <name type="ordered locus">M5005_Spy1145</name>
</gene>
<keyword id="KW-0464">Manganese</keyword>
<keyword id="KW-0479">Metal-binding</keyword>
<keyword id="KW-0560">Oxidoreductase</keyword>
<keyword id="KW-1185">Reference proteome</keyword>
<keyword id="KW-0964">Secreted</keyword>
<reference key="1">
    <citation type="journal article" date="2001" name="Proc. Natl. Acad. Sci. U.S.A.">
        <title>Complete genome sequence of an M1 strain of Streptococcus pyogenes.</title>
        <authorList>
            <person name="Ferretti J.J."/>
            <person name="McShan W.M."/>
            <person name="Ajdic D.J."/>
            <person name="Savic D.J."/>
            <person name="Savic G."/>
            <person name="Lyon K."/>
            <person name="Primeaux C."/>
            <person name="Sezate S."/>
            <person name="Suvorov A.N."/>
            <person name="Kenton S."/>
            <person name="Lai H.S."/>
            <person name="Lin S.P."/>
            <person name="Qian Y."/>
            <person name="Jia H.G."/>
            <person name="Najar F.Z."/>
            <person name="Ren Q."/>
            <person name="Zhu H."/>
            <person name="Song L."/>
            <person name="White J."/>
            <person name="Yuan X."/>
            <person name="Clifton S.W."/>
            <person name="Roe B.A."/>
            <person name="McLaughlin R.E."/>
        </authorList>
    </citation>
    <scope>NUCLEOTIDE SEQUENCE [LARGE SCALE GENOMIC DNA]</scope>
    <source>
        <strain>ATCC 700294 / SF370 / Serotype M1</strain>
    </source>
</reference>
<reference key="2">
    <citation type="journal article" date="2005" name="J. Infect. Dis.">
        <title>Evolutionary origin and emergence of a highly successful clone of serotype M1 group A Streptococcus involved multiple horizontal gene transfer events.</title>
        <authorList>
            <person name="Sumby P."/>
            <person name="Porcella S.F."/>
            <person name="Madrigal A.G."/>
            <person name="Barbian K.D."/>
            <person name="Virtaneva K."/>
            <person name="Ricklefs S.M."/>
            <person name="Sturdevant D.E."/>
            <person name="Graham M.R."/>
            <person name="Vuopio-Varkila J."/>
            <person name="Hoe N.P."/>
            <person name="Musser J.M."/>
        </authorList>
    </citation>
    <scope>NUCLEOTIDE SEQUENCE [LARGE SCALE GENOMIC DNA]</scope>
    <source>
        <strain>ATCC BAA-947 / MGAS5005 / Serotype M1</strain>
    </source>
</reference>
<organism>
    <name type="scientific">Streptococcus pyogenes serotype M1</name>
    <dbReference type="NCBI Taxonomy" id="301447"/>
    <lineage>
        <taxon>Bacteria</taxon>
        <taxon>Bacillati</taxon>
        <taxon>Bacillota</taxon>
        <taxon>Bacilli</taxon>
        <taxon>Lactobacillales</taxon>
        <taxon>Streptococcaceae</taxon>
        <taxon>Streptococcus</taxon>
    </lineage>
</organism>
<name>SODM_STRP1</name>
<feature type="initiator methionine" description="Removed" evidence="1">
    <location>
        <position position="1"/>
    </location>
</feature>
<feature type="chain" id="PRO_0000160101" description="Superoxide dismutase [Mn]">
    <location>
        <begin position="2"/>
        <end position="201"/>
    </location>
</feature>
<feature type="binding site" evidence="1">
    <location>
        <position position="27"/>
    </location>
    <ligand>
        <name>Mn(2+)</name>
        <dbReference type="ChEBI" id="CHEBI:29035"/>
    </ligand>
</feature>
<feature type="binding site" evidence="1">
    <location>
        <position position="81"/>
    </location>
    <ligand>
        <name>Mn(2+)</name>
        <dbReference type="ChEBI" id="CHEBI:29035"/>
    </ligand>
</feature>
<feature type="binding site" evidence="1">
    <location>
        <position position="163"/>
    </location>
    <ligand>
        <name>Mn(2+)</name>
        <dbReference type="ChEBI" id="CHEBI:29035"/>
    </ligand>
</feature>
<feature type="binding site" evidence="1">
    <location>
        <position position="167"/>
    </location>
    <ligand>
        <name>Mn(2+)</name>
        <dbReference type="ChEBI" id="CHEBI:29035"/>
    </ligand>
</feature>
<accession>P0C0I1</accession>
<accession>O54264</accession>
<accession>P77957</accession>
<accession>Q48Y12</accession>
<accession>Q59941</accession>
<evidence type="ECO:0000250" key="1"/>
<evidence type="ECO:0000305" key="2"/>
<dbReference type="EC" id="1.15.1.1"/>
<dbReference type="EMBL" id="AE004092">
    <property type="protein sequence ID" value="AAK34221.1"/>
    <property type="molecule type" value="Genomic_DNA"/>
</dbReference>
<dbReference type="EMBL" id="CP000017">
    <property type="protein sequence ID" value="AAZ51763.1"/>
    <property type="molecule type" value="Genomic_DNA"/>
</dbReference>
<dbReference type="RefSeq" id="NP_269500.1">
    <property type="nucleotide sequence ID" value="NC_002737.2"/>
</dbReference>
<dbReference type="SMR" id="P0C0I1"/>
<dbReference type="PaxDb" id="1314-HKU360_01181"/>
<dbReference type="KEGG" id="spy:SPy_1406"/>
<dbReference type="KEGG" id="spz:M5005_Spy1145"/>
<dbReference type="PATRIC" id="fig|160490.10.peg.1225"/>
<dbReference type="HOGENOM" id="CLU_031625_0_1_9"/>
<dbReference type="OMA" id="DSLINWD"/>
<dbReference type="Proteomes" id="UP000000750">
    <property type="component" value="Chromosome"/>
</dbReference>
<dbReference type="GO" id="GO:0005737">
    <property type="term" value="C:cytoplasm"/>
    <property type="evidence" value="ECO:0007669"/>
    <property type="project" value="TreeGrafter"/>
</dbReference>
<dbReference type="GO" id="GO:0005576">
    <property type="term" value="C:extracellular region"/>
    <property type="evidence" value="ECO:0007669"/>
    <property type="project" value="UniProtKB-SubCell"/>
</dbReference>
<dbReference type="GO" id="GO:0046872">
    <property type="term" value="F:metal ion binding"/>
    <property type="evidence" value="ECO:0007669"/>
    <property type="project" value="UniProtKB-KW"/>
</dbReference>
<dbReference type="GO" id="GO:0004784">
    <property type="term" value="F:superoxide dismutase activity"/>
    <property type="evidence" value="ECO:0007669"/>
    <property type="project" value="UniProtKB-EC"/>
</dbReference>
<dbReference type="FunFam" id="1.10.287.990:FF:000001">
    <property type="entry name" value="Superoxide dismutase"/>
    <property type="match status" value="1"/>
</dbReference>
<dbReference type="FunFam" id="3.55.40.20:FF:000001">
    <property type="entry name" value="Superoxide dismutase"/>
    <property type="match status" value="1"/>
</dbReference>
<dbReference type="Gene3D" id="1.10.287.990">
    <property type="entry name" value="Fe,Mn superoxide dismutase (SOD) domain"/>
    <property type="match status" value="1"/>
</dbReference>
<dbReference type="Gene3D" id="3.55.40.20">
    <property type="entry name" value="Iron/manganese superoxide dismutase, C-terminal domain"/>
    <property type="match status" value="1"/>
</dbReference>
<dbReference type="InterPro" id="IPR001189">
    <property type="entry name" value="Mn/Fe_SOD"/>
</dbReference>
<dbReference type="InterPro" id="IPR019833">
    <property type="entry name" value="Mn/Fe_SOD_BS"/>
</dbReference>
<dbReference type="InterPro" id="IPR019832">
    <property type="entry name" value="Mn/Fe_SOD_C"/>
</dbReference>
<dbReference type="InterPro" id="IPR019831">
    <property type="entry name" value="Mn/Fe_SOD_N"/>
</dbReference>
<dbReference type="InterPro" id="IPR036324">
    <property type="entry name" value="Mn/Fe_SOD_N_sf"/>
</dbReference>
<dbReference type="InterPro" id="IPR036314">
    <property type="entry name" value="SOD_C_sf"/>
</dbReference>
<dbReference type="PANTHER" id="PTHR43595">
    <property type="entry name" value="37S RIBOSOMAL PROTEIN S26, MITOCHONDRIAL"/>
    <property type="match status" value="1"/>
</dbReference>
<dbReference type="PANTHER" id="PTHR43595:SF2">
    <property type="entry name" value="SMALL RIBOSOMAL SUBUNIT PROTEIN MS42"/>
    <property type="match status" value="1"/>
</dbReference>
<dbReference type="Pfam" id="PF02777">
    <property type="entry name" value="Sod_Fe_C"/>
    <property type="match status" value="1"/>
</dbReference>
<dbReference type="Pfam" id="PF00081">
    <property type="entry name" value="Sod_Fe_N"/>
    <property type="match status" value="1"/>
</dbReference>
<dbReference type="PIRSF" id="PIRSF000349">
    <property type="entry name" value="SODismutase"/>
    <property type="match status" value="1"/>
</dbReference>
<dbReference type="PRINTS" id="PR01703">
    <property type="entry name" value="MNSODISMTASE"/>
</dbReference>
<dbReference type="SUPFAM" id="SSF54719">
    <property type="entry name" value="Fe,Mn superoxide dismutase (SOD), C-terminal domain"/>
    <property type="match status" value="1"/>
</dbReference>
<dbReference type="SUPFAM" id="SSF46609">
    <property type="entry name" value="Fe,Mn superoxide dismutase (SOD), N-terminal domain"/>
    <property type="match status" value="1"/>
</dbReference>
<dbReference type="PROSITE" id="PS00088">
    <property type="entry name" value="SOD_MN"/>
    <property type="match status" value="1"/>
</dbReference>
<comment type="function">
    <text evidence="1">Destroys superoxide anion radicals which are normally produced within the cells and which are toxic to biological systems.</text>
</comment>
<comment type="catalytic activity">
    <reaction>
        <text>2 superoxide + 2 H(+) = H2O2 + O2</text>
        <dbReference type="Rhea" id="RHEA:20696"/>
        <dbReference type="ChEBI" id="CHEBI:15378"/>
        <dbReference type="ChEBI" id="CHEBI:15379"/>
        <dbReference type="ChEBI" id="CHEBI:16240"/>
        <dbReference type="ChEBI" id="CHEBI:18421"/>
        <dbReference type="EC" id="1.15.1.1"/>
    </reaction>
</comment>
<comment type="cofactor">
    <cofactor evidence="1">
        <name>Mn(2+)</name>
        <dbReference type="ChEBI" id="CHEBI:29035"/>
    </cofactor>
    <text evidence="1">Binds 1 Mn(2+) ion per subunit.</text>
</comment>
<comment type="subunit">
    <text evidence="1">Homodimer.</text>
</comment>
<comment type="subcellular location">
    <subcellularLocation>
        <location evidence="1">Secreted</location>
    </subcellularLocation>
</comment>
<comment type="similarity">
    <text evidence="2">Belongs to the iron/manganese superoxide dismutase family.</text>
</comment>
<comment type="caution">
    <text evidence="2">Although found extracellularly, no signal sequence is present. An alternative secretory pathway may be used.</text>
</comment>
<proteinExistence type="inferred from homology"/>